<protein>
    <recommendedName>
        <fullName evidence="12">Grainyhead-like protein 3 homolog</fullName>
    </recommendedName>
    <alternativeName>
        <fullName>Transcription factor CP2-like 4</fullName>
    </alternativeName>
</protein>
<evidence type="ECO:0000250" key="1">
    <source>
        <dbReference type="UniProtKB" id="Q8TE85"/>
    </source>
</evidence>
<evidence type="ECO:0000255" key="2">
    <source>
        <dbReference type="PROSITE-ProRule" id="PRU01313"/>
    </source>
</evidence>
<evidence type="ECO:0000269" key="3">
    <source>
    </source>
</evidence>
<evidence type="ECO:0000269" key="4">
    <source>
    </source>
</evidence>
<evidence type="ECO:0000269" key="5">
    <source>
    </source>
</evidence>
<evidence type="ECO:0000269" key="6">
    <source>
    </source>
</evidence>
<evidence type="ECO:0000269" key="7">
    <source>
    </source>
</evidence>
<evidence type="ECO:0000269" key="8">
    <source>
    </source>
</evidence>
<evidence type="ECO:0000303" key="9">
    <source>
    </source>
</evidence>
<evidence type="ECO:0000305" key="10"/>
<evidence type="ECO:0000305" key="11">
    <source>
    </source>
</evidence>
<evidence type="ECO:0000312" key="12">
    <source>
        <dbReference type="MGI" id="MGI:2655333"/>
    </source>
</evidence>
<feature type="chain" id="PRO_0000227998" description="Grainyhead-like protein 3 homolog">
    <location>
        <begin position="1"/>
        <end position="603"/>
    </location>
</feature>
<feature type="domain" description="Grh/CP2 DB" evidence="2">
    <location>
        <begin position="226"/>
        <end position="461"/>
    </location>
</feature>
<feature type="region of interest" description="Transcription activation" evidence="1">
    <location>
        <begin position="30"/>
        <end position="95"/>
    </location>
</feature>
<accession>Q5FWH3</accession>
<accession>A2ADI2</accession>
<sequence>MSNELDFRSVRLLKNDPVSFQKFPYSNEDEAWKTYLENPLTAATKAMMRVNGDEESVAALSFLYDYYMGPKEKRILSSSTGGRNDQGKKFYHSMDYEPDLAPLESPTHLMKFLTENVSGSPDYTDQLKKNNLLGLEGVLPTPGKTNTVPPGPSKLEASSMDSYLLPASDIYDNGSLNSLFESIHGVPPTQRWQPDSTFKDDPQESLLFPDILKTSPDPPCPEDYPGLKSDFEYTLGSPKAIHIKAGESPMAYLNKGQFYPVTLRTPAGGKGLALSSSKVKSVVMVVFDNDKVPVEQLRFWRHWHSRQPTAKQRVIDVADCKENFNTVQHIEEVAYNALSFVWNVNEEAKVFIGVNCLSTDFSSQKGVKGVPLNLQIDTYDCGAGTERLVHRAVCQIKIFCDKGAERKMRDDERKQFRRKVKCPDSSNNAGIKGCLLSGFRGNETTYLRPETDLETQPVLFIPNLHFSSLQRPGGVVPSAGHSSSDRLPLKRTCSPFAEEFEPLPSKQAKEDDLQRVLLYVRRETEEVFDALMLKTPDLKGLRNAISEKYGLPEENICKVYKKCKRGILVNMDNNIIQHYSNHVAFLLDMGELDGKIQIILKEL</sequence>
<gene>
    <name evidence="12" type="primary">Grhl3</name>
    <name type="synonym">Get1</name>
    <name evidence="9" type="synonym">Som</name>
    <name type="synonym">Tfcp2l4</name>
</gene>
<comment type="function">
    <text evidence="3 4 5 6 7 8">Transcription factor playing important roles in primary neurulation and in the differentiation of stratified epithelia of both ectodermal and endodermal origin. Binds directly to the consensus DNA sequence 5'-AACCGGTT-3' acting as an activator and repressor on distinct target genes. Essential for epidermal differentiation and barrier formation at the end of embryogenesis with TGM3 as critical direct target (PubMed:20654612, PubMed:21081122, PubMed:25347468). Exhibits functional redundancy with GRHL2 in epidermal morphogenetic events such as eyelid fusion and epidermal wound repair (PubMed:21081122). Despite being dispensable during normal epidermal homeostasis in the adulthood, is again required for barrier repair after immune-mediated epidermal damage, regulates distinct gene batteries in embryonic epidermal differentiation and adult epidermal barrier reformation after injury (PubMed:25347468). Plays unique and cooperative roles with GRHL2 in establishing distinct zones of primary neurulation. Essential for spinal closure, functions cooperatively with GRHL2 in closure 2 (forebrain/midbrain boundary) and posterior neuropore closure (PubMed:14608380, PubMed:20654612). Also required for proper development of the oral periderm (PubMed:24360809). No genetic interaction with GRHL1, no functional cooperativity due to diverse target gene selectivity (PubMed:21081122).</text>
</comment>
<comment type="subunit">
    <text evidence="1 4">Homodimer, also forms heterodimers with GRHL1 and GRHL2 (By similarity). Interacts with LMO4 (PubMed:16949565).</text>
</comment>
<comment type="subcellular location">
    <subcellularLocation>
        <location evidence="6">Nucleus</location>
    </subcellularLocation>
</comment>
<comment type="developmental stage">
    <text evidence="3">At 8.5 dpc, expression is confined to the non-neural ectoderm immediately adjacent to the neural plate, which was undergoing folding to form the neural tube. At later time points, more widespread expression is observed in the surface ectoderm, with a progressive increase until 15.5 dpc. Also expressed in other tissues lined by squamous epithelium, including the oral cavity, urogenital sinus and anal canal.</text>
</comment>
<comment type="disruption phenotype">
    <text evidence="3 4 5 6 7">Mutant pups display neural tube defects and don't survive to weaning. During embryogenesis, fail to form the epidermal barrier and exhibit defective neural tube closure and embryonic wound repair. The epidermis show a severe barrier function defect associated with impaired differentiation of the epidermis, including defects of the stratum corneum, extracellular lipid composition and cell adhesion in the granular layer. Embryos have thoracolumbosacral spina bifida and curled tail, and 2% have coincident exencephaly. Embryos are smaller than their control littermates, exhibit failed eyelid fusion, the penetrance of which is influenced by genetic background, and shorter intestine with blood in the lumen (PubMed:14608380, PubMed:16949565, PubMed:21081122). Embryos have oral bilateral epithelial adhesions because of the loss of periderm and a cleft palate in some cases (PubMed:24360809). LMO4:GRHL3 double knockout embryos show significantly more frequent exencephaly than that found in single knockouts. Similarly, open-eye phenotype was more penetrant in double knockout mice. Double mutants show an enhancement of the epidermal terminal differentiation defect (PubMed:16949565).</text>
</comment>
<comment type="miscellaneous">
    <text evidence="11">GRHL genes (GRHL1, GRHL2 and GRHL3) show a paradoxal lack of redundancy despite their extensive sequence identity in the DNA-binding and protein dimerization domains and the fact that the core consensus DNA binding sites are identical. They have related but remarkably different functions during embryogenesis because of their differential spatiotemporal expression patterns during development.</text>
</comment>
<comment type="similarity">
    <text evidence="10">Belongs to the grh/CP2 family. Grainyhead subfamily.</text>
</comment>
<keyword id="KW-0238">DNA-binding</keyword>
<keyword id="KW-0539">Nucleus</keyword>
<keyword id="KW-1185">Reference proteome</keyword>
<keyword id="KW-0804">Transcription</keyword>
<keyword id="KW-0805">Transcription regulation</keyword>
<proteinExistence type="evidence at protein level"/>
<name>GRHL3_MOUSE</name>
<organism>
    <name type="scientific">Mus musculus</name>
    <name type="common">Mouse</name>
    <dbReference type="NCBI Taxonomy" id="10090"/>
    <lineage>
        <taxon>Eukaryota</taxon>
        <taxon>Metazoa</taxon>
        <taxon>Chordata</taxon>
        <taxon>Craniata</taxon>
        <taxon>Vertebrata</taxon>
        <taxon>Euteleostomi</taxon>
        <taxon>Mammalia</taxon>
        <taxon>Eutheria</taxon>
        <taxon>Euarchontoglires</taxon>
        <taxon>Glires</taxon>
        <taxon>Rodentia</taxon>
        <taxon>Myomorpha</taxon>
        <taxon>Muroidea</taxon>
        <taxon>Muridae</taxon>
        <taxon>Murinae</taxon>
        <taxon>Mus</taxon>
        <taxon>Mus</taxon>
    </lineage>
</organism>
<reference key="1">
    <citation type="journal article" date="2009" name="PLoS Biol.">
        <title>Lineage-specific biology revealed by a finished genome assembly of the mouse.</title>
        <authorList>
            <person name="Church D.M."/>
            <person name="Goodstadt L."/>
            <person name="Hillier L.W."/>
            <person name="Zody M.C."/>
            <person name="Goldstein S."/>
            <person name="She X."/>
            <person name="Bult C.J."/>
            <person name="Agarwala R."/>
            <person name="Cherry J.L."/>
            <person name="DiCuccio M."/>
            <person name="Hlavina W."/>
            <person name="Kapustin Y."/>
            <person name="Meric P."/>
            <person name="Maglott D."/>
            <person name="Birtle Z."/>
            <person name="Marques A.C."/>
            <person name="Graves T."/>
            <person name="Zhou S."/>
            <person name="Teague B."/>
            <person name="Potamousis K."/>
            <person name="Churas C."/>
            <person name="Place M."/>
            <person name="Herschleb J."/>
            <person name="Runnheim R."/>
            <person name="Forrest D."/>
            <person name="Amos-Landgraf J."/>
            <person name="Schwartz D.C."/>
            <person name="Cheng Z."/>
            <person name="Lindblad-Toh K."/>
            <person name="Eichler E.E."/>
            <person name="Ponting C.P."/>
        </authorList>
    </citation>
    <scope>NUCLEOTIDE SEQUENCE [LARGE SCALE GENOMIC DNA]</scope>
    <source>
        <strain>C57BL/6J</strain>
    </source>
</reference>
<reference key="2">
    <citation type="journal article" date="2004" name="Genome Res.">
        <title>The status, quality, and expansion of the NIH full-length cDNA project: the Mammalian Gene Collection (MGC).</title>
        <authorList>
            <consortium name="The MGC Project Team"/>
        </authorList>
    </citation>
    <scope>NUCLEOTIDE SEQUENCE [LARGE SCALE MRNA]</scope>
    <source>
        <strain>C57BL/6J</strain>
        <tissue>Eye</tissue>
    </source>
</reference>
<reference key="3">
    <citation type="journal article" date="2003" name="Nat. Med.">
        <title>Inositol- and folate-resistant neural tube defects in mice lacking the epithelial-specific factor Grhl-3.</title>
        <authorList>
            <person name="Ting S.B."/>
            <person name="Wilanowski T."/>
            <person name="Auden A."/>
            <person name="Hall M."/>
            <person name="Voss A.K."/>
            <person name="Thomas T."/>
            <person name="Parekh V."/>
            <person name="Cunningham J.M."/>
            <person name="Jane S.M."/>
        </authorList>
    </citation>
    <scope>FUNCTION</scope>
    <scope>DISRUPTION PHENOTYPE</scope>
    <scope>DEVELOPMENTAL STAGE</scope>
</reference>
<reference key="4">
    <citation type="journal article" date="2006" name="Dev. Biol.">
        <title>The Grainyhead-like epithelial transactivator Get-1/Grhl3 regulates epidermal terminal differentiation and interacts functionally with LMO4.</title>
        <authorList>
            <person name="Yu Z."/>
            <person name="Lin K.K."/>
            <person name="Bhandari A."/>
            <person name="Spencer J.A."/>
            <person name="Xu X."/>
            <person name="Wang N."/>
            <person name="Lu Z."/>
            <person name="Gill G.N."/>
            <person name="Roop D.R."/>
            <person name="Wertz P."/>
            <person name="Andersen B."/>
        </authorList>
    </citation>
    <scope>FUNCTION</scope>
    <scope>DISRUPTION PHENOTYPE</scope>
</reference>
<reference key="5">
    <citation type="journal article" date="2010" name="Dev. Biol.">
        <title>Regional neural tube closure defined by the Grainy head-like transcription factors.</title>
        <authorList>
            <person name="Rifat Y."/>
            <person name="Parekh V."/>
            <person name="Wilanowski T."/>
            <person name="Hislop N.R."/>
            <person name="Auden A."/>
            <person name="Ting S.B."/>
            <person name="Cunningham J.M."/>
            <person name="Jane S.M."/>
        </authorList>
    </citation>
    <scope>FUNCTION</scope>
    <scope>DISRUPTION PHENOTYPE</scope>
</reference>
<reference key="6">
    <citation type="journal article" date="2011" name="Dev. Biol.">
        <title>The unique and cooperative roles of the Grainy head-like transcription factors in epidermal development reflect unexpected target gene specificity.</title>
        <authorList>
            <person name="Boglev Y."/>
            <person name="Wilanowski T."/>
            <person name="Caddy J."/>
            <person name="Parekh V."/>
            <person name="Auden A."/>
            <person name="Darido C."/>
            <person name="Hislop N.R."/>
            <person name="Cangkrama M."/>
            <person name="Ting S.B."/>
            <person name="Jane S.M."/>
        </authorList>
    </citation>
    <scope>FUNCTION</scope>
    <scope>DISRUPTION PHENOTYPED</scope>
    <scope>SUBCELLULAR LOCATION</scope>
    <scope>DNA-BINDING</scope>
</reference>
<reference key="7">
    <citation type="journal article" date="2014" name="Am. J. Hum. Genet.">
        <title>Dominant mutations in GRHL3 cause Van der Woude Syndrome and disrupt oral periderm development.</title>
        <authorList>
            <person name="Peyrard-Janvid M."/>
            <person name="Leslie E.J."/>
            <person name="Kousa Y.A."/>
            <person name="Smith T.L."/>
            <person name="Dunnwald M."/>
            <person name="Magnusson M."/>
            <person name="Lentz B.A."/>
            <person name="Unneberg P."/>
            <person name="Fransson I."/>
            <person name="Koillinen H.K."/>
            <person name="Rautio J."/>
            <person name="Pegelow M."/>
            <person name="Karsten A."/>
            <person name="Basel-Vanagaite L."/>
            <person name="Gordon W."/>
            <person name="Andersen B."/>
            <person name="Svensson T."/>
            <person name="Murray J.C."/>
            <person name="Cornell R.A."/>
            <person name="Kere J."/>
            <person name="Schutte B.C."/>
        </authorList>
    </citation>
    <scope>FUNCTION</scope>
    <scope>DISRUPTION PHENOTYPE</scope>
</reference>
<reference key="8">
    <citation type="journal article" date="2014" name="J. Clin. Invest.">
        <title>A GRHL3-regulated repair pathway suppresses immune-mediated epidermal hyperplasia.</title>
        <authorList>
            <person name="Gordon W.M."/>
            <person name="Zeller M.D."/>
            <person name="Klein R.H."/>
            <person name="Swindell W.R."/>
            <person name="Ho H."/>
            <person name="Espetia F."/>
            <person name="Gudjonsson J.E."/>
            <person name="Baldi P.F."/>
            <person name="Andersen B."/>
        </authorList>
    </citation>
    <scope>FUNCTION</scope>
</reference>
<dbReference type="EMBL" id="AL670720">
    <property type="status" value="NOT_ANNOTATED_CDS"/>
    <property type="molecule type" value="Genomic_DNA"/>
</dbReference>
<dbReference type="EMBL" id="BC089372">
    <property type="protein sequence ID" value="AAH89372.1"/>
    <property type="molecule type" value="mRNA"/>
</dbReference>
<dbReference type="CCDS" id="CCDS38920.1"/>
<dbReference type="RefSeq" id="NP_001013778.1">
    <property type="nucleotide sequence ID" value="NM_001013756.3"/>
</dbReference>
<dbReference type="SMR" id="Q5FWH3"/>
<dbReference type="FunCoup" id="Q5FWH3">
    <property type="interactions" value="1186"/>
</dbReference>
<dbReference type="STRING" id="10090.ENSMUSP00000101481"/>
<dbReference type="GlyGen" id="Q5FWH3">
    <property type="glycosylation" value="2 sites, 1 O-linked glycan (1 site)"/>
</dbReference>
<dbReference type="iPTMnet" id="Q5FWH3"/>
<dbReference type="PhosphoSitePlus" id="Q5FWH3"/>
<dbReference type="PaxDb" id="10090-ENSMUSP00000101481"/>
<dbReference type="PeptideAtlas" id="Q5FWH3"/>
<dbReference type="ProteomicsDB" id="271016"/>
<dbReference type="Antibodypedia" id="15710">
    <property type="antibodies" value="181 antibodies from 21 providers"/>
</dbReference>
<dbReference type="DNASU" id="230824"/>
<dbReference type="Ensembl" id="ENSMUST00000105855.2">
    <property type="protein sequence ID" value="ENSMUSP00000101481.2"/>
    <property type="gene ID" value="ENSMUSG00000037188.8"/>
</dbReference>
<dbReference type="GeneID" id="230824"/>
<dbReference type="KEGG" id="mmu:230824"/>
<dbReference type="UCSC" id="uc008vgr.1">
    <property type="organism name" value="mouse"/>
</dbReference>
<dbReference type="AGR" id="MGI:2655333"/>
<dbReference type="CTD" id="57822"/>
<dbReference type="MGI" id="MGI:2655333">
    <property type="gene designation" value="Grhl3"/>
</dbReference>
<dbReference type="VEuPathDB" id="HostDB:ENSMUSG00000037188"/>
<dbReference type="eggNOG" id="KOG4091">
    <property type="taxonomic scope" value="Eukaryota"/>
</dbReference>
<dbReference type="GeneTree" id="ENSGT00940000157970"/>
<dbReference type="HOGENOM" id="CLU_021156_1_1_1"/>
<dbReference type="InParanoid" id="Q5FWH3"/>
<dbReference type="OMA" id="MDSWSYL"/>
<dbReference type="OrthoDB" id="7680836at2759"/>
<dbReference type="PhylomeDB" id="Q5FWH3"/>
<dbReference type="TreeFam" id="TF314132"/>
<dbReference type="BioGRID-ORCS" id="230824">
    <property type="hits" value="3 hits in 79 CRISPR screens"/>
</dbReference>
<dbReference type="ChiTaRS" id="Grhl3">
    <property type="organism name" value="mouse"/>
</dbReference>
<dbReference type="PRO" id="PR:Q5FWH3"/>
<dbReference type="Proteomes" id="UP000000589">
    <property type="component" value="Chromosome 4"/>
</dbReference>
<dbReference type="RNAct" id="Q5FWH3">
    <property type="molecule type" value="protein"/>
</dbReference>
<dbReference type="Bgee" id="ENSMUSG00000037188">
    <property type="expression patterns" value="Expressed in mucosa of urinary bladder and 111 other cell types or tissues"/>
</dbReference>
<dbReference type="GO" id="GO:0015629">
    <property type="term" value="C:actin cytoskeleton"/>
    <property type="evidence" value="ECO:0007669"/>
    <property type="project" value="Ensembl"/>
</dbReference>
<dbReference type="GO" id="GO:0005929">
    <property type="term" value="C:cilium"/>
    <property type="evidence" value="ECO:0007669"/>
    <property type="project" value="Ensembl"/>
</dbReference>
<dbReference type="GO" id="GO:0005829">
    <property type="term" value="C:cytosol"/>
    <property type="evidence" value="ECO:0007669"/>
    <property type="project" value="Ensembl"/>
</dbReference>
<dbReference type="GO" id="GO:0005654">
    <property type="term" value="C:nucleoplasm"/>
    <property type="evidence" value="ECO:0007669"/>
    <property type="project" value="Ensembl"/>
</dbReference>
<dbReference type="GO" id="GO:0005634">
    <property type="term" value="C:nucleus"/>
    <property type="evidence" value="ECO:0000314"/>
    <property type="project" value="MGI"/>
</dbReference>
<dbReference type="GO" id="GO:0031490">
    <property type="term" value="F:chromatin DNA binding"/>
    <property type="evidence" value="ECO:0000250"/>
    <property type="project" value="UniProtKB"/>
</dbReference>
<dbReference type="GO" id="GO:0001228">
    <property type="term" value="F:DNA-binding transcription activator activity, RNA polymerase II-specific"/>
    <property type="evidence" value="ECO:0007669"/>
    <property type="project" value="Ensembl"/>
</dbReference>
<dbReference type="GO" id="GO:0000981">
    <property type="term" value="F:DNA-binding transcription factor activity, RNA polymerase II-specific"/>
    <property type="evidence" value="ECO:0000314"/>
    <property type="project" value="MGI"/>
</dbReference>
<dbReference type="GO" id="GO:0000978">
    <property type="term" value="F:RNA polymerase II cis-regulatory region sequence-specific DNA binding"/>
    <property type="evidence" value="ECO:0000314"/>
    <property type="project" value="MGI"/>
</dbReference>
<dbReference type="GO" id="GO:0043565">
    <property type="term" value="F:sequence-specific DNA binding"/>
    <property type="evidence" value="ECO:0000314"/>
    <property type="project" value="UniProtKB"/>
</dbReference>
<dbReference type="GO" id="GO:0007417">
    <property type="term" value="P:central nervous system development"/>
    <property type="evidence" value="ECO:0000315"/>
    <property type="project" value="MGI"/>
</dbReference>
<dbReference type="GO" id="GO:0090103">
    <property type="term" value="P:cochlea morphogenesis"/>
    <property type="evidence" value="ECO:0000316"/>
    <property type="project" value="MGI"/>
</dbReference>
<dbReference type="GO" id="GO:0007398">
    <property type="term" value="P:ectoderm development"/>
    <property type="evidence" value="ECO:0000315"/>
    <property type="project" value="MGI"/>
</dbReference>
<dbReference type="GO" id="GO:0008544">
    <property type="term" value="P:epidermis development"/>
    <property type="evidence" value="ECO:0000315"/>
    <property type="project" value="UniProtKB"/>
</dbReference>
<dbReference type="GO" id="GO:0001736">
    <property type="term" value="P:establishment of planar polarity"/>
    <property type="evidence" value="ECO:0000316"/>
    <property type="project" value="MGI"/>
</dbReference>
<dbReference type="GO" id="GO:0061436">
    <property type="term" value="P:establishment of skin barrier"/>
    <property type="evidence" value="ECO:0000315"/>
    <property type="project" value="UniProtKB"/>
</dbReference>
<dbReference type="GO" id="GO:0061029">
    <property type="term" value="P:eyelid development in camera-type eye"/>
    <property type="evidence" value="ECO:0000315"/>
    <property type="project" value="MGI"/>
</dbReference>
<dbReference type="GO" id="GO:0010467">
    <property type="term" value="P:gene expression"/>
    <property type="evidence" value="ECO:0000315"/>
    <property type="project" value="MGI"/>
</dbReference>
<dbReference type="GO" id="GO:0001843">
    <property type="term" value="P:neural tube closure"/>
    <property type="evidence" value="ECO:0000315"/>
    <property type="project" value="UniProtKB"/>
</dbReference>
<dbReference type="GO" id="GO:0007389">
    <property type="term" value="P:pattern specification process"/>
    <property type="evidence" value="ECO:0000315"/>
    <property type="project" value="MGI"/>
</dbReference>
<dbReference type="GO" id="GO:0045893">
    <property type="term" value="P:positive regulation of DNA-templated transcription"/>
    <property type="evidence" value="ECO:0000314"/>
    <property type="project" value="MGI"/>
</dbReference>
<dbReference type="GO" id="GO:0010628">
    <property type="term" value="P:positive regulation of gene expression"/>
    <property type="evidence" value="ECO:0000315"/>
    <property type="project" value="MGI"/>
</dbReference>
<dbReference type="GO" id="GO:0045944">
    <property type="term" value="P:positive regulation of transcription by RNA polymerase II"/>
    <property type="evidence" value="ECO:0000315"/>
    <property type="project" value="MGI"/>
</dbReference>
<dbReference type="GO" id="GO:0032956">
    <property type="term" value="P:regulation of actin cytoskeleton organization"/>
    <property type="evidence" value="ECO:0000266"/>
    <property type="project" value="MGI"/>
</dbReference>
<dbReference type="GO" id="GO:0006366">
    <property type="term" value="P:transcription by RNA polymerase II"/>
    <property type="evidence" value="ECO:0000315"/>
    <property type="project" value="MGI"/>
</dbReference>
<dbReference type="GO" id="GO:0042060">
    <property type="term" value="P:wound healing"/>
    <property type="evidence" value="ECO:0000315"/>
    <property type="project" value="MGI"/>
</dbReference>
<dbReference type="InterPro" id="IPR007604">
    <property type="entry name" value="CP2"/>
</dbReference>
<dbReference type="InterPro" id="IPR040167">
    <property type="entry name" value="TF_CP2-like"/>
</dbReference>
<dbReference type="PANTHER" id="PTHR11037:SF6">
    <property type="entry name" value="GRAINYHEAD-LIKE PROTEIN 3 HOMOLOG"/>
    <property type="match status" value="1"/>
</dbReference>
<dbReference type="PANTHER" id="PTHR11037">
    <property type="entry name" value="TRANSCRIPTION FACTOR CP2"/>
    <property type="match status" value="1"/>
</dbReference>
<dbReference type="Pfam" id="PF04516">
    <property type="entry name" value="CP2"/>
    <property type="match status" value="1"/>
</dbReference>
<dbReference type="Pfam" id="PF25416">
    <property type="entry name" value="GRHL1_C"/>
    <property type="match status" value="1"/>
</dbReference>
<dbReference type="PROSITE" id="PS51968">
    <property type="entry name" value="GRH_CP2_DB"/>
    <property type="match status" value="1"/>
</dbReference>